<protein>
    <recommendedName>
        <fullName>Nuclear distribution protein nudE-like 1</fullName>
        <shortName>Protein Nudel</shortName>
    </recommendedName>
    <alternativeName>
        <fullName>Mitosin-associated protein 1</fullName>
    </alternativeName>
</protein>
<organism>
    <name type="scientific">Homo sapiens</name>
    <name type="common">Human</name>
    <dbReference type="NCBI Taxonomy" id="9606"/>
    <lineage>
        <taxon>Eukaryota</taxon>
        <taxon>Metazoa</taxon>
        <taxon>Chordata</taxon>
        <taxon>Craniata</taxon>
        <taxon>Vertebrata</taxon>
        <taxon>Euteleostomi</taxon>
        <taxon>Mammalia</taxon>
        <taxon>Eutheria</taxon>
        <taxon>Euarchontoglires</taxon>
        <taxon>Primates</taxon>
        <taxon>Haplorrhini</taxon>
        <taxon>Catarrhini</taxon>
        <taxon>Hominidae</taxon>
        <taxon>Homo</taxon>
    </lineage>
</organism>
<name>NDEL1_HUMAN</name>
<sequence length="345" mass="38375">MDGEDIPDFSSLKEETAYWKELSLKYKQSFQEARDELVEFQEGSRELEAELEAQLVQAEQRNRDLQADNQRLKYEVEALKEKLEHQYAQSYKQVSVLEDDLSQTRAIKEQLHKYVRELEQANDDLERAKRATIVSLEDFEQRLNQAIERNAFLESELDEKESLLVSVQRLKDEARDLRQELAVRERQQEVTRKSAPSSPTLDCEKMDSAVQASLSLPATPVGKGTENTFPSPKAIPNGFGTSPLTPSARISALNIVGDLLRKVGALESKLAACRNFAKDQASRKSYISGNVNCGVLNGNGTKFSRSGHTSFFDKGAVNGFDPAPPPPGLGSSRPSSAPGMLPLSV</sequence>
<reference key="1">
    <citation type="journal article" date="2000" name="Neuron">
        <title>NUDEL is a novel cdk5 substrate that associates with LIS1 and cytoplasmic dynein.</title>
        <authorList>
            <person name="Niethammer M."/>
            <person name="Smith D.S."/>
            <person name="Ayala R."/>
            <person name="Peng J."/>
            <person name="Ko J."/>
            <person name="Lee M.-S."/>
            <person name="Morabito M."/>
            <person name="Tsai L.-H."/>
        </authorList>
    </citation>
    <scope>NUCLEOTIDE SEQUENCE [MRNA] (ISOFORM 1)</scope>
    <scope>INTERACTION WITH DYNEIN AND PAFAH1B1</scope>
    <scope>SUBCELLULAR LOCATION</scope>
    <scope>PHOSPHORYLATION BY CDK5</scope>
    <scope>MUTAGENESIS OF SER-198; THR-219 AND SER-231</scope>
    <source>
        <tissue>Brain</tissue>
    </source>
</reference>
<reference key="2">
    <citation type="journal article" date="2003" name="Mol. Cell. Biol.">
        <title>Human Nudel and NudE as regulators of cytoplasmic dynein in poleward protein transport along the mitotic spindle.</title>
        <authorList>
            <person name="Yan X."/>
            <person name="Li F."/>
            <person name="Liang Y."/>
            <person name="Shen Y."/>
            <person name="Zhao X."/>
            <person name="Huang Q."/>
            <person name="Zhu X."/>
        </authorList>
    </citation>
    <scope>NUCLEOTIDE SEQUENCE [MRNA] (ISOFORM 1)</scope>
    <scope>FUNCTION</scope>
    <scope>INTERACTION WITH PAFAH1B1</scope>
    <scope>SUBCELLULAR LOCATION</scope>
    <scope>PHOSPHORYLATION BY CDK1 AND MAPK1</scope>
    <scope>MUTAGENESIS OF SER-198; THR-219; SER-231; SER-242 AND THR-245</scope>
</reference>
<reference key="3">
    <citation type="journal article" date="2005" name="Proc. Natl. Acad. Sci. U.S.A.">
        <title>Inhibition of NUDEL (nuclear distribution element-like)-oligopeptidase activity by disrupted-in-schizophrenia 1.</title>
        <authorList>
            <person name="Hayashi M.A.F."/>
            <person name="Portaro F.C.V."/>
            <person name="Bastos M.F."/>
            <person name="Guerreiro J.R."/>
            <person name="Oliveira V."/>
            <person name="Gorrao S.S."/>
            <person name="Tambourgi D.V."/>
            <person name="Sant'Anna O.A."/>
            <person name="Whiting P.J."/>
            <person name="Camargo L.M."/>
            <person name="Konno K."/>
            <person name="Brandon N.J."/>
            <person name="de Camargo A.C.M."/>
        </authorList>
    </citation>
    <scope>NUCLEOTIDE SEQUENCE [MRNA] (ISOFORM 1)</scope>
    <scope>PUTATIVE FUNCTION AS AN OLIGOPEPTIDASE</scope>
    <scope>INTERACTION WITH DISC1</scope>
    <scope>MUTAGENESIS OF CYS-273</scope>
    <source>
        <tissue>Brain</tissue>
    </source>
</reference>
<reference key="4">
    <citation type="journal article" date="2004" name="Nat. Genet.">
        <title>Complete sequencing and characterization of 21,243 full-length human cDNAs.</title>
        <authorList>
            <person name="Ota T."/>
            <person name="Suzuki Y."/>
            <person name="Nishikawa T."/>
            <person name="Otsuki T."/>
            <person name="Sugiyama T."/>
            <person name="Irie R."/>
            <person name="Wakamatsu A."/>
            <person name="Hayashi K."/>
            <person name="Sato H."/>
            <person name="Nagai K."/>
            <person name="Kimura K."/>
            <person name="Makita H."/>
            <person name="Sekine M."/>
            <person name="Obayashi M."/>
            <person name="Nishi T."/>
            <person name="Shibahara T."/>
            <person name="Tanaka T."/>
            <person name="Ishii S."/>
            <person name="Yamamoto J."/>
            <person name="Saito K."/>
            <person name="Kawai Y."/>
            <person name="Isono Y."/>
            <person name="Nakamura Y."/>
            <person name="Nagahari K."/>
            <person name="Murakami K."/>
            <person name="Yasuda T."/>
            <person name="Iwayanagi T."/>
            <person name="Wagatsuma M."/>
            <person name="Shiratori A."/>
            <person name="Sudo H."/>
            <person name="Hosoiri T."/>
            <person name="Kaku Y."/>
            <person name="Kodaira H."/>
            <person name="Kondo H."/>
            <person name="Sugawara M."/>
            <person name="Takahashi M."/>
            <person name="Kanda K."/>
            <person name="Yokoi T."/>
            <person name="Furuya T."/>
            <person name="Kikkawa E."/>
            <person name="Omura Y."/>
            <person name="Abe K."/>
            <person name="Kamihara K."/>
            <person name="Katsuta N."/>
            <person name="Sato K."/>
            <person name="Tanikawa M."/>
            <person name="Yamazaki M."/>
            <person name="Ninomiya K."/>
            <person name="Ishibashi T."/>
            <person name="Yamashita H."/>
            <person name="Murakawa K."/>
            <person name="Fujimori K."/>
            <person name="Tanai H."/>
            <person name="Kimata M."/>
            <person name="Watanabe M."/>
            <person name="Hiraoka S."/>
            <person name="Chiba Y."/>
            <person name="Ishida S."/>
            <person name="Ono Y."/>
            <person name="Takiguchi S."/>
            <person name="Watanabe S."/>
            <person name="Yosida M."/>
            <person name="Hotuta T."/>
            <person name="Kusano J."/>
            <person name="Kanehori K."/>
            <person name="Takahashi-Fujii A."/>
            <person name="Hara H."/>
            <person name="Tanase T.-O."/>
            <person name="Nomura Y."/>
            <person name="Togiya S."/>
            <person name="Komai F."/>
            <person name="Hara R."/>
            <person name="Takeuchi K."/>
            <person name="Arita M."/>
            <person name="Imose N."/>
            <person name="Musashino K."/>
            <person name="Yuuki H."/>
            <person name="Oshima A."/>
            <person name="Sasaki N."/>
            <person name="Aotsuka S."/>
            <person name="Yoshikawa Y."/>
            <person name="Matsunawa H."/>
            <person name="Ichihara T."/>
            <person name="Shiohata N."/>
            <person name="Sano S."/>
            <person name="Moriya S."/>
            <person name="Momiyama H."/>
            <person name="Satoh N."/>
            <person name="Takami S."/>
            <person name="Terashima Y."/>
            <person name="Suzuki O."/>
            <person name="Nakagawa S."/>
            <person name="Senoh A."/>
            <person name="Mizoguchi H."/>
            <person name="Goto Y."/>
            <person name="Shimizu F."/>
            <person name="Wakebe H."/>
            <person name="Hishigaki H."/>
            <person name="Watanabe T."/>
            <person name="Sugiyama A."/>
            <person name="Takemoto M."/>
            <person name="Kawakami B."/>
            <person name="Yamazaki M."/>
            <person name="Watanabe K."/>
            <person name="Kumagai A."/>
            <person name="Itakura S."/>
            <person name="Fukuzumi Y."/>
            <person name="Fujimori Y."/>
            <person name="Komiyama M."/>
            <person name="Tashiro H."/>
            <person name="Tanigami A."/>
            <person name="Fujiwara T."/>
            <person name="Ono T."/>
            <person name="Yamada K."/>
            <person name="Fujii Y."/>
            <person name="Ozaki K."/>
            <person name="Hirao M."/>
            <person name="Ohmori Y."/>
            <person name="Kawabata A."/>
            <person name="Hikiji T."/>
            <person name="Kobatake N."/>
            <person name="Inagaki H."/>
            <person name="Ikema Y."/>
            <person name="Okamoto S."/>
            <person name="Okitani R."/>
            <person name="Kawakami T."/>
            <person name="Noguchi S."/>
            <person name="Itoh T."/>
            <person name="Shigeta K."/>
            <person name="Senba T."/>
            <person name="Matsumura K."/>
            <person name="Nakajima Y."/>
            <person name="Mizuno T."/>
            <person name="Morinaga M."/>
            <person name="Sasaki M."/>
            <person name="Togashi T."/>
            <person name="Oyama M."/>
            <person name="Hata H."/>
            <person name="Watanabe M."/>
            <person name="Komatsu T."/>
            <person name="Mizushima-Sugano J."/>
            <person name="Satoh T."/>
            <person name="Shirai Y."/>
            <person name="Takahashi Y."/>
            <person name="Nakagawa K."/>
            <person name="Okumura K."/>
            <person name="Nagase T."/>
            <person name="Nomura N."/>
            <person name="Kikuchi H."/>
            <person name="Masuho Y."/>
            <person name="Yamashita R."/>
            <person name="Nakai K."/>
            <person name="Yada T."/>
            <person name="Nakamura Y."/>
            <person name="Ohara O."/>
            <person name="Isogai T."/>
            <person name="Sugano S."/>
        </authorList>
    </citation>
    <scope>NUCLEOTIDE SEQUENCE [LARGE SCALE MRNA] (ISOFORM 1)</scope>
    <scope>NUCLEOTIDE SEQUENCE [LARGE SCALE MRNA] OF 152-328 (ISOFORM 3)</scope>
    <source>
        <tissue>Caudate nucleus</tissue>
    </source>
</reference>
<reference key="5">
    <citation type="journal article" date="2007" name="BMC Genomics">
        <title>The full-ORF clone resource of the German cDNA consortium.</title>
        <authorList>
            <person name="Bechtel S."/>
            <person name="Rosenfelder H."/>
            <person name="Duda A."/>
            <person name="Schmidt C.P."/>
            <person name="Ernst U."/>
            <person name="Wellenreuther R."/>
            <person name="Mehrle A."/>
            <person name="Schuster C."/>
            <person name="Bahr A."/>
            <person name="Bloecker H."/>
            <person name="Heubner D."/>
            <person name="Hoerlein A."/>
            <person name="Michel G."/>
            <person name="Wedler H."/>
            <person name="Koehrer K."/>
            <person name="Ottenwaelder B."/>
            <person name="Poustka A."/>
            <person name="Wiemann S."/>
            <person name="Schupp I."/>
        </authorList>
    </citation>
    <scope>NUCLEOTIDE SEQUENCE [LARGE SCALE MRNA] (ISOFORM 2)</scope>
    <source>
        <tissue>Spinal cord</tissue>
    </source>
</reference>
<reference key="6">
    <citation type="journal article" date="2006" name="Nature">
        <title>DNA sequence of human chromosome 17 and analysis of rearrangement in the human lineage.</title>
        <authorList>
            <person name="Zody M.C."/>
            <person name="Garber M."/>
            <person name="Adams D.J."/>
            <person name="Sharpe T."/>
            <person name="Harrow J."/>
            <person name="Lupski J.R."/>
            <person name="Nicholson C."/>
            <person name="Searle S.M."/>
            <person name="Wilming L."/>
            <person name="Young S.K."/>
            <person name="Abouelleil A."/>
            <person name="Allen N.R."/>
            <person name="Bi W."/>
            <person name="Bloom T."/>
            <person name="Borowsky M.L."/>
            <person name="Bugalter B.E."/>
            <person name="Butler J."/>
            <person name="Chang J.L."/>
            <person name="Chen C.-K."/>
            <person name="Cook A."/>
            <person name="Corum B."/>
            <person name="Cuomo C.A."/>
            <person name="de Jong P.J."/>
            <person name="DeCaprio D."/>
            <person name="Dewar K."/>
            <person name="FitzGerald M."/>
            <person name="Gilbert J."/>
            <person name="Gibson R."/>
            <person name="Gnerre S."/>
            <person name="Goldstein S."/>
            <person name="Grafham D.V."/>
            <person name="Grocock R."/>
            <person name="Hafez N."/>
            <person name="Hagopian D.S."/>
            <person name="Hart E."/>
            <person name="Norman C.H."/>
            <person name="Humphray S."/>
            <person name="Jaffe D.B."/>
            <person name="Jones M."/>
            <person name="Kamal M."/>
            <person name="Khodiyar V.K."/>
            <person name="LaButti K."/>
            <person name="Laird G."/>
            <person name="Lehoczky J."/>
            <person name="Liu X."/>
            <person name="Lokyitsang T."/>
            <person name="Loveland J."/>
            <person name="Lui A."/>
            <person name="Macdonald P."/>
            <person name="Major J.E."/>
            <person name="Matthews L."/>
            <person name="Mauceli E."/>
            <person name="McCarroll S.A."/>
            <person name="Mihalev A.H."/>
            <person name="Mudge J."/>
            <person name="Nguyen C."/>
            <person name="Nicol R."/>
            <person name="O'Leary S.B."/>
            <person name="Osoegawa K."/>
            <person name="Schwartz D.C."/>
            <person name="Shaw-Smith C."/>
            <person name="Stankiewicz P."/>
            <person name="Steward C."/>
            <person name="Swarbreck D."/>
            <person name="Venkataraman V."/>
            <person name="Whittaker C.A."/>
            <person name="Yang X."/>
            <person name="Zimmer A.R."/>
            <person name="Bradley A."/>
            <person name="Hubbard T."/>
            <person name="Birren B.W."/>
            <person name="Rogers J."/>
            <person name="Lander E.S."/>
            <person name="Nusbaum C."/>
        </authorList>
    </citation>
    <scope>NUCLEOTIDE SEQUENCE [LARGE SCALE GENOMIC DNA]</scope>
</reference>
<reference key="7">
    <citation type="submission" date="2005-09" db="EMBL/GenBank/DDBJ databases">
        <authorList>
            <person name="Mural R.J."/>
            <person name="Istrail S."/>
            <person name="Sutton G.G."/>
            <person name="Florea L."/>
            <person name="Halpern A.L."/>
            <person name="Mobarry C.M."/>
            <person name="Lippert R."/>
            <person name="Walenz B."/>
            <person name="Shatkay H."/>
            <person name="Dew I."/>
            <person name="Miller J.R."/>
            <person name="Flanigan M.J."/>
            <person name="Edwards N.J."/>
            <person name="Bolanos R."/>
            <person name="Fasulo D."/>
            <person name="Halldorsson B.V."/>
            <person name="Hannenhalli S."/>
            <person name="Turner R."/>
            <person name="Yooseph S."/>
            <person name="Lu F."/>
            <person name="Nusskern D.R."/>
            <person name="Shue B.C."/>
            <person name="Zheng X.H."/>
            <person name="Zhong F."/>
            <person name="Delcher A.L."/>
            <person name="Huson D.H."/>
            <person name="Kravitz S.A."/>
            <person name="Mouchard L."/>
            <person name="Reinert K."/>
            <person name="Remington K.A."/>
            <person name="Clark A.G."/>
            <person name="Waterman M.S."/>
            <person name="Eichler E.E."/>
            <person name="Adams M.D."/>
            <person name="Hunkapiller M.W."/>
            <person name="Myers E.W."/>
            <person name="Venter J.C."/>
        </authorList>
    </citation>
    <scope>NUCLEOTIDE SEQUENCE [LARGE SCALE GENOMIC DNA]</scope>
</reference>
<reference key="8">
    <citation type="journal article" date="2004" name="Genome Res.">
        <title>The status, quality, and expansion of the NIH full-length cDNA project: the Mammalian Gene Collection (MGC).</title>
        <authorList>
            <consortium name="The MGC Project Team"/>
        </authorList>
    </citation>
    <scope>NUCLEOTIDE SEQUENCE [LARGE SCALE MRNA] (ISOFORM 1)</scope>
    <source>
        <tissue>Brain</tissue>
    </source>
</reference>
<reference key="9">
    <citation type="journal article" date="2003" name="Hum. Mol. Genet.">
        <title>DISC1 (Disrupted-In-Schizophrenia 1) is a centrosome-associated protein that interacts with MAP1A, MIPT3, ATF4/5 and NUDEL: regulation and loss of interaction with mutation.</title>
        <authorList>
            <person name="Morris J.A."/>
            <person name="Kandpal G."/>
            <person name="Ma L."/>
            <person name="Austin C.P."/>
        </authorList>
    </citation>
    <scope>INTERACTION WITH DISC1</scope>
    <scope>SUBCELLULAR LOCATION</scope>
</reference>
<reference key="10">
    <citation type="journal article" date="2003" name="Proc. Natl. Acad. Sci. U.S.A.">
        <title>Disrupted-in-Schizophrenia-1 (DISC-1): mutant truncation prevents binding to NudE-like (NUDEL) and inhibits neurite outgrowth.</title>
        <authorList>
            <person name="Ozeki Y."/>
            <person name="Tomoda T."/>
            <person name="Kleiderlein J."/>
            <person name="Kamiya A."/>
            <person name="Bord L."/>
            <person name="Fujii K."/>
            <person name="Okawa M."/>
            <person name="Yamada N."/>
            <person name="Hatten M.E."/>
            <person name="Snyder S.H."/>
            <person name="Ross C.A."/>
            <person name="Sawa A."/>
        </authorList>
    </citation>
    <scope>INTERACTION WITH DISC1</scope>
</reference>
<reference key="11">
    <citation type="journal article" date="2004" name="Proc. Natl. Acad. Sci. U.S.A.">
        <authorList>
            <person name="Ozeki Y."/>
            <person name="Tomoda T."/>
            <person name="Kleiderlein J."/>
            <person name="Kamiya A."/>
            <person name="Bord L."/>
            <person name="Fujii K."/>
            <person name="Okawa M."/>
            <person name="Yamada N."/>
            <person name="Hatten M.E."/>
            <person name="Snyder S.H."/>
            <person name="Ross C.A."/>
            <person name="Sawa A."/>
        </authorList>
    </citation>
    <scope>ERRATUM OF PUBMED:12506198</scope>
</reference>
<reference key="12">
    <citation type="journal article" date="2004" name="J. Cell Biol.">
        <title>Nudel functions in membrane traffic mainly through association with Lis1 and cytoplasmic dynein.</title>
        <authorList>
            <person name="Liang Y."/>
            <person name="Yu W."/>
            <person name="Li Y."/>
            <person name="Yang Z."/>
            <person name="Yan X."/>
            <person name="Huang Q."/>
            <person name="Zhu X."/>
        </authorList>
    </citation>
    <scope>FUNCTION</scope>
    <scope>SELF-ASSOCIATION</scope>
    <scope>INTERACTION WITH DYNACTIN; DYNEIN AND PAFAH1B1</scope>
    <scope>SUBCELLULAR LOCATION</scope>
</reference>
<reference key="13">
    <citation type="journal article" date="2004" name="Mol. Cell. Neurosci.">
        <title>Disrupted in Schizophrenia 1 and Nudel form a neurodevelopmentally regulated protein complex: implications for schizophrenia and other major neurological disorders.</title>
        <authorList>
            <person name="Brandon N.J."/>
            <person name="Handford E.J."/>
            <person name="Schurov I."/>
            <person name="Rain J.-C."/>
            <person name="Pelling M."/>
            <person name="Duran-Jimeniz B."/>
            <person name="Camargo L.M."/>
            <person name="Oliver K.R."/>
            <person name="Beher D."/>
            <person name="Shearman M.S."/>
            <person name="Whiting P.J."/>
        </authorList>
    </citation>
    <scope>INTERACTION WITH DISC1</scope>
</reference>
<reference key="14">
    <citation type="journal article" date="2004" name="Neuron">
        <title>Coupling PAF signaling to dynein regulation: structure of LIS1 in complex with PAF-acetylhydrolase.</title>
        <authorList>
            <person name="Tarricone C."/>
            <person name="Perrina F."/>
            <person name="Monzani S."/>
            <person name="Massimiliano L."/>
            <person name="Kim M.-H."/>
            <person name="Derewenda Z.S."/>
            <person name="Knapp S."/>
            <person name="Tsai L.-H."/>
            <person name="Musacchio A."/>
        </authorList>
    </citation>
    <scope>SELF-ASSOCIATION</scope>
    <scope>INTERACTION WITH PAFAH1B1</scope>
</reference>
<reference key="15">
    <citation type="journal article" date="2005" name="Biochim. Biophys. Acta">
        <title>Cloning and characterization of the human and rabbit NUDEL-oligopeptidase promoters and their negative regulation.</title>
        <authorList>
            <person name="Guerreiro J.R."/>
            <person name="Winnischofer S.M.B."/>
            <person name="Bastos M.F."/>
            <person name="Portaro F.C.V."/>
            <person name="Sogayar M.C."/>
            <person name="de Camargo A.C.M."/>
            <person name="Hayashi M.A.F."/>
        </authorList>
    </citation>
    <scope>TISSUE SPECIFICITY</scope>
</reference>
<reference key="16">
    <citation type="journal article" date="2005" name="Hum. Mol. Genet.">
        <title>Recruitment of katanin p60 by phosphorylated NDEL1, an LIS1 interacting protein, is essential for mitotic cell division and neuronal migration.</title>
        <authorList>
            <person name="Toyo-Oka K."/>
            <person name="Sasaki S."/>
            <person name="Yano Y."/>
            <person name="Mori D."/>
            <person name="Kobayashi T."/>
            <person name="Toyoshima Y.Y."/>
            <person name="Tokuoka S.M."/>
            <person name="Ishii S."/>
            <person name="Shimizu T."/>
            <person name="Muramatsu M."/>
            <person name="Hiraiwa N."/>
            <person name="Yoshiki A."/>
            <person name="Wynshaw-Boris A."/>
            <person name="Hirotsune S."/>
        </authorList>
    </citation>
    <scope>INTERACTION WITH KATNA1 AND KATNB1</scope>
    <scope>SUBCELLULAR LOCATION</scope>
    <scope>DEVELOPMENTAL STAGE</scope>
    <scope>PHOSPHORYLATION</scope>
</reference>
<reference key="17">
    <citation type="journal article" date="2006" name="Hum. Mol. Genet.">
        <title>DISC1-NDEL1/NUDEL protein interaction, an essential component for neurite outgrowth, is modulated by genetic variations of DISC1.</title>
        <authorList>
            <person name="Kamiya A."/>
            <person name="Tomoda T."/>
            <person name="Chang J."/>
            <person name="Takaki M."/>
            <person name="Zhan C."/>
            <person name="Morita M."/>
            <person name="Cascio M.B."/>
            <person name="Elashvili S."/>
            <person name="Koizumi H."/>
            <person name="Takanezawa Y."/>
            <person name="Dickerson F."/>
            <person name="Yolken R."/>
            <person name="Arai H."/>
            <person name="Sawa A."/>
        </authorList>
    </citation>
    <scope>INTERACTION WITH DISC1</scope>
    <scope>MUTAGENESIS OF LEU-266 AND GLU-267</scope>
</reference>
<reference key="18">
    <citation type="journal article" date="2006" name="Mol. Biol. Cell">
        <title>Nudel contributes to microtubule anchoring at the mother centriole and is involved in both dynein-dependent and -independent centrosomal protein assembly.</title>
        <authorList>
            <person name="Guo J."/>
            <person name="Yang Z."/>
            <person name="Song W."/>
            <person name="Chen Q."/>
            <person name="Wang F."/>
            <person name="Zhang Q."/>
            <person name="Zhu X."/>
        </authorList>
    </citation>
    <scope>FUNCTION</scope>
    <scope>INTERACTION WITH DYNACTIN; TUBULIN GAMMA; PAFAH1B1; PCM1; PCNT</scope>
    <scope>SUBCELLULAR LOCATION</scope>
</reference>
<reference key="19">
    <citation type="journal article" date="2006" name="Oncogene">
        <title>Centrosomal proteins Nde1 and Su48 form a complex regulated by phosphorylation.</title>
        <authorList>
            <person name="Hirohashi Y."/>
            <person name="Wang Q."/>
            <person name="Liu Q."/>
            <person name="Li B."/>
            <person name="Du X."/>
            <person name="Zhang H."/>
            <person name="Furuuchi K."/>
            <person name="Masuda K."/>
            <person name="Sato N."/>
            <person name="Greene M.I."/>
        </authorList>
    </citation>
    <scope>INTERACTION WITH ZNF365</scope>
</reference>
<reference key="20">
    <citation type="journal article" date="2007" name="Curr. Biol.">
        <title>Cenp-F links kinetochores to Ndel1/Nde1/Lis1/dynein microtubule motor complexes.</title>
        <authorList>
            <person name="Vergnolle M.A.S."/>
            <person name="Taylor S.S."/>
        </authorList>
    </citation>
    <scope>FUNCTION</scope>
    <scope>INTERACTION WITH CENPF</scope>
    <scope>SUBCELLULAR LOCATION</scope>
</reference>
<reference key="21">
    <citation type="journal article" date="2008" name="Proc. Natl. Acad. Sci. U.S.A.">
        <title>A quantitative atlas of mitotic phosphorylation.</title>
        <authorList>
            <person name="Dephoure N."/>
            <person name="Zhou C."/>
            <person name="Villen J."/>
            <person name="Beausoleil S.A."/>
            <person name="Bakalarski C.E."/>
            <person name="Elledge S.J."/>
            <person name="Gygi S.P."/>
        </authorList>
    </citation>
    <scope>PHOSPHORYLATION [LARGE SCALE ANALYSIS] AT SER-215; THR-219 AND THR-245</scope>
    <scope>IDENTIFICATION BY MASS SPECTROMETRY [LARGE SCALE ANALYSIS]</scope>
    <source>
        <tissue>Cervix carcinoma</tissue>
    </source>
</reference>
<reference key="22">
    <citation type="journal article" date="2009" name="Anal. Chem.">
        <title>Lys-N and trypsin cover complementary parts of the phosphoproteome in a refined SCX-based approach.</title>
        <authorList>
            <person name="Gauci S."/>
            <person name="Helbig A.O."/>
            <person name="Slijper M."/>
            <person name="Krijgsveld J."/>
            <person name="Heck A.J."/>
            <person name="Mohammed S."/>
        </authorList>
    </citation>
    <scope>IDENTIFICATION BY MASS SPECTROMETRY [LARGE SCALE ANALYSIS]</scope>
</reference>
<reference key="23">
    <citation type="journal article" date="2010" name="EMBO J.">
        <title>Ndel1 palmitoylation: a new mean to regulate cytoplasmic dynein activity.</title>
        <authorList>
            <person name="Shmueli A."/>
            <person name="Segal M."/>
            <person name="Sapir T."/>
            <person name="Tsutsumi R."/>
            <person name="Noritake J."/>
            <person name="Bar A."/>
            <person name="Sapoznik S."/>
            <person name="Fukata Y."/>
            <person name="Orr I."/>
            <person name="Fukata M."/>
            <person name="Reiner O."/>
        </authorList>
    </citation>
    <scope>PALMITOYLATION AT CYS-273 BY ZDHHC2; ZDHHC3 AND ZDHHC7</scope>
</reference>
<reference key="24">
    <citation type="journal article" date="2010" name="Sci. Signal.">
        <title>Quantitative phosphoproteomics reveals widespread full phosphorylation site occupancy during mitosis.</title>
        <authorList>
            <person name="Olsen J.V."/>
            <person name="Vermeulen M."/>
            <person name="Santamaria A."/>
            <person name="Kumar C."/>
            <person name="Miller M.L."/>
            <person name="Jensen L.J."/>
            <person name="Gnad F."/>
            <person name="Cox J."/>
            <person name="Jensen T.S."/>
            <person name="Nigg E.A."/>
            <person name="Brunak S."/>
            <person name="Mann M."/>
        </authorList>
    </citation>
    <scope>PHOSPHORYLATION [LARGE SCALE ANALYSIS] AT SER-215; THR-219; SER-242 AND THR-245</scope>
    <scope>IDENTIFICATION BY MASS SPECTROMETRY [LARGE SCALE ANALYSIS]</scope>
    <source>
        <tissue>Cervix carcinoma</tissue>
    </source>
</reference>
<reference key="25">
    <citation type="journal article" date="2013" name="J. Proteome Res.">
        <title>Toward a comprehensive characterization of a human cancer cell phosphoproteome.</title>
        <authorList>
            <person name="Zhou H."/>
            <person name="Di Palma S."/>
            <person name="Preisinger C."/>
            <person name="Peng M."/>
            <person name="Polat A.N."/>
            <person name="Heck A.J."/>
            <person name="Mohammed S."/>
        </authorList>
    </citation>
    <scope>PHOSPHORYLATION [LARGE SCALE ANALYSIS] AT SER-215 AND SER-231</scope>
    <scope>IDENTIFICATION BY MASS SPECTROMETRY [LARGE SCALE ANALYSIS]</scope>
    <source>
        <tissue>Cervix carcinoma</tissue>
        <tissue>Erythroleukemia</tissue>
    </source>
</reference>
<reference key="26">
    <citation type="journal article" date="2022" name="Structure">
        <title>Nde1 is a Rab9 effector for loading late endosomes to cytoplasmic dynein motor complex.</title>
        <authorList>
            <person name="Zhang Y."/>
            <person name="Chen Z."/>
            <person name="Wang F."/>
            <person name="Sun H."/>
            <person name="Zhu X."/>
            <person name="Ding J."/>
            <person name="Zhang T."/>
        </authorList>
    </citation>
    <scope>FUNCTION</scope>
    <scope>INTERACTION WITH RAB9A</scope>
</reference>
<accession>Q9GZM8</accession>
<accession>B3KP93</accession>
<accession>D3DTS0</accession>
<accession>J3QT32</accession>
<accession>Q86T80</accession>
<accession>Q8TAR7</accession>
<accession>Q9UH50</accession>
<gene>
    <name type="primary">NDEL1</name>
    <name type="synonym">EOPA</name>
    <name type="synonym">MITAP1</name>
    <name type="synonym">NUDEL</name>
</gene>
<feature type="chain" id="PRO_0000240210" description="Nuclear distribution protein nudE-like 1">
    <location>
        <begin position="1"/>
        <end position="345"/>
    </location>
</feature>
<feature type="region of interest" description="Self-association" evidence="1">
    <location>
        <begin position="56"/>
        <end position="166"/>
    </location>
</feature>
<feature type="region of interest" description="Interaction with KATNB1" evidence="1">
    <location>
        <begin position="64"/>
        <end position="189"/>
    </location>
</feature>
<feature type="region of interest" description="Required for interaction with PAFAH1B1">
    <location>
        <begin position="114"/>
        <end position="133"/>
    </location>
</feature>
<feature type="region of interest" description="Interaction with CENPF" evidence="19">
    <location>
        <begin position="175"/>
        <end position="345"/>
    </location>
</feature>
<feature type="region of interest" description="Interaction with YWHAE" evidence="1">
    <location>
        <begin position="189"/>
        <end position="256"/>
    </location>
</feature>
<feature type="region of interest" description="Interaction with NEFL" evidence="1">
    <location>
        <begin position="191"/>
        <end position="345"/>
    </location>
</feature>
<feature type="region of interest" description="Interaction with KATNA1" evidence="1">
    <location>
        <begin position="195"/>
        <end position="256"/>
    </location>
</feature>
<feature type="region of interest" description="Interaction with DISC1">
    <location>
        <begin position="241"/>
        <end position="280"/>
    </location>
</feature>
<feature type="region of interest" description="Required for localization to the centrosome and interaction with dynein, dynactin, tubulin gamma, PCM1 and PCNT" evidence="16">
    <location>
        <begin position="256"/>
        <end position="291"/>
    </location>
</feature>
<feature type="region of interest" description="Disordered" evidence="5">
    <location>
        <begin position="315"/>
        <end position="345"/>
    </location>
</feature>
<feature type="coiled-coil region" evidence="4">
    <location>
        <begin position="28"/>
        <end position="190"/>
    </location>
</feature>
<feature type="compositionally biased region" description="Low complexity" evidence="5">
    <location>
        <begin position="329"/>
        <end position="339"/>
    </location>
</feature>
<feature type="modified residue" description="Phosphoserine" evidence="26 27 28">
    <location>
        <position position="215"/>
    </location>
</feature>
<feature type="modified residue" description="Phosphothreonine; by CDK1 and MAPK1" evidence="26 27">
    <location>
        <position position="219"/>
    </location>
</feature>
<feature type="modified residue" description="Phosphoserine" evidence="28">
    <location>
        <position position="231"/>
    </location>
</feature>
<feature type="modified residue" description="Phosphoserine; by CDK1" evidence="27">
    <location>
        <position position="242"/>
    </location>
</feature>
<feature type="modified residue" description="Phosphothreonine; by CDK1 and MAPK1" evidence="26 27">
    <location>
        <position position="245"/>
    </location>
</feature>
<feature type="modified residue" description="Phosphoserine" evidence="2">
    <location>
        <position position="344"/>
    </location>
</feature>
<feature type="lipid moiety-binding region" description="S-palmitoyl cysteine; by ZDHHC2, ZDHHC3 and ZDHHC7" evidence="20">
    <location>
        <position position="273"/>
    </location>
</feature>
<feature type="splice variant" id="VSP_019310" description="In isoform 2." evidence="23">
    <original>AVNGFDPAPPPPGLGSSRPSSAPGMLPLSV</original>
    <variation>SSSSCAIRASRRRFSSSSADLAGRGGGDGSIPAQHSTGASGKAPPPTLLLET</variation>
    <location>
        <begin position="316"/>
        <end position="345"/>
    </location>
</feature>
<feature type="splice variant" id="VSP_047509" description="In isoform 3." evidence="22">
    <original>AVNGFDPAPPPPGLGSSRPSSAPGMLPLSV</original>
    <variation>QEKVIFPTLFMGQ</variation>
    <location>
        <begin position="316"/>
        <end position="345"/>
    </location>
</feature>
<feature type="mutagenesis site" description="Abrogates mitotic phosphorylation; when associated with V-219; A-231; A-242 and V-245. Abrogates phosphorylation by CDK5; when associated with A-219 and A-231." evidence="6 8">
    <original>S</original>
    <variation>A</variation>
    <location>
        <position position="198"/>
    </location>
</feature>
<feature type="mutagenesis site" description="Enhances interaction with PAFAH1B1 and impairs centrosomal localization; when associated with E-219; E-231; E-242 and E-245." evidence="6 8">
    <original>S</original>
    <variation>E</variation>
    <location>
        <position position="198"/>
    </location>
</feature>
<feature type="mutagenesis site" description="Abrogates phosphorylation by CDK5; when associated with A-198 and A-231." evidence="6 8">
    <original>T</original>
    <variation>A</variation>
    <location>
        <position position="219"/>
    </location>
</feature>
<feature type="mutagenesis site" description="Enhances interaction with PAFAH1B1 and impairs centrosomal localization; when associated with E-198; E-231; E-242 and E-245." evidence="6 8">
    <original>T</original>
    <variation>E</variation>
    <location>
        <position position="219"/>
    </location>
</feature>
<feature type="mutagenesis site" description="Abrogates mitotic phosphorylation; when associated with A-198; A-231; A-242 and V-245." evidence="6 8">
    <original>T</original>
    <variation>V</variation>
    <location>
        <position position="219"/>
    </location>
</feature>
<feature type="mutagenesis site" description="Abrogates mitotic phosphorylation; when associated with A-198; V-219; A-242 and V-245. Abrogates phosphorylation by CDK5; when associated with A-198 and A-219." evidence="6 8">
    <original>S</original>
    <variation>A</variation>
    <location>
        <position position="231"/>
    </location>
</feature>
<feature type="mutagenesis site" description="Enhances interaction with PAFAH1B1 and impairs centrosomal localization; when associated with E-198; E-219; E-242 and E-245." evidence="6 8">
    <original>S</original>
    <variation>E</variation>
    <location>
        <position position="231"/>
    </location>
</feature>
<feature type="mutagenesis site" description="Abrogates mitotic phosphorylation; when associated with A-198; V-219; A-231 and V-245." evidence="8">
    <original>S</original>
    <variation>A</variation>
    <location>
        <position position="242"/>
    </location>
</feature>
<feature type="mutagenesis site" description="Enhances interaction with PAFAH1B1 and impairs centrosomal localization; when associated with E-198; E-219; E-231 and E-245." evidence="8">
    <original>S</original>
    <variation>E</variation>
    <location>
        <position position="242"/>
    </location>
</feature>
<feature type="mutagenesis site" description="Enhances interaction with PAFAH1B1 and impairs centrosomal localization; when associated with E-198; E-219; E-231 and E-242." evidence="8">
    <original>T</original>
    <variation>E</variation>
    <location>
        <position position="245"/>
    </location>
</feature>
<feature type="mutagenesis site" description="Abrogates mitotic phosphorylation; when associated with A-198; V-219; A-231 and A-242." evidence="8">
    <original>T</original>
    <variation>V</variation>
    <location>
        <position position="245"/>
    </location>
</feature>
<feature type="mutagenesis site" description="Abolishes interaction with DISC1; when associated with A-267." evidence="18">
    <original>L</original>
    <variation>A</variation>
    <location>
        <position position="266"/>
    </location>
</feature>
<feature type="mutagenesis site" description="Abolishes interaction with DISC1; when associated with A-266." evidence="18">
    <original>E</original>
    <variation>A</variation>
    <location>
        <position position="267"/>
    </location>
</feature>
<feature type="mutagenesis site" description="Abolishes oligopeptidase activity." evidence="13">
    <original>C</original>
    <variation>A</variation>
    <location>
        <position position="273"/>
    </location>
</feature>
<feature type="sequence conflict" description="In Ref. 8; AAH26101." evidence="24" ref="8">
    <original>P</original>
    <variation>T</variation>
    <location>
        <position position="322"/>
    </location>
</feature>
<feature type="helix" evidence="29">
    <location>
        <begin position="59"/>
        <end position="165"/>
    </location>
</feature>
<proteinExistence type="evidence at protein level"/>
<dbReference type="EMBL" id="AY004871">
    <property type="protein sequence ID" value="AAF97497.1"/>
    <property type="molecule type" value="mRNA"/>
</dbReference>
<dbReference type="EMBL" id="AF182078">
    <property type="protein sequence ID" value="AAG43425.1"/>
    <property type="molecule type" value="mRNA"/>
</dbReference>
<dbReference type="EMBL" id="AF217798">
    <property type="protein sequence ID" value="AAF24516.3"/>
    <property type="molecule type" value="mRNA"/>
</dbReference>
<dbReference type="EMBL" id="AK056014">
    <property type="protein sequence ID" value="BAG51605.1"/>
    <property type="molecule type" value="mRNA"/>
</dbReference>
<dbReference type="EMBL" id="DA256375">
    <property type="status" value="NOT_ANNOTATED_CDS"/>
    <property type="molecule type" value="mRNA"/>
</dbReference>
<dbReference type="EMBL" id="AL832648">
    <property type="protein sequence ID" value="CAD89957.3"/>
    <property type="molecule type" value="mRNA"/>
</dbReference>
<dbReference type="EMBL" id="AC026130">
    <property type="status" value="NOT_ANNOTATED_CDS"/>
    <property type="molecule type" value="Genomic_DNA"/>
</dbReference>
<dbReference type="EMBL" id="CH471108">
    <property type="protein sequence ID" value="EAW90051.1"/>
    <property type="molecule type" value="Genomic_DNA"/>
</dbReference>
<dbReference type="EMBL" id="CH471108">
    <property type="protein sequence ID" value="EAW90052.1"/>
    <property type="molecule type" value="Genomic_DNA"/>
</dbReference>
<dbReference type="EMBL" id="BC026101">
    <property type="protein sequence ID" value="AAH26101.1"/>
    <property type="molecule type" value="mRNA"/>
</dbReference>
<dbReference type="CCDS" id="CCDS11143.1">
    <molecule id="Q9GZM8-1"/>
</dbReference>
<dbReference type="CCDS" id="CCDS32564.1">
    <molecule id="Q9GZM8-3"/>
</dbReference>
<dbReference type="RefSeq" id="NP_001020750.1">
    <molecule id="Q9GZM8-3"/>
    <property type="nucleotide sequence ID" value="NM_001025579.3"/>
</dbReference>
<dbReference type="RefSeq" id="NP_110435.1">
    <molecule id="Q9GZM8-1"/>
    <property type="nucleotide sequence ID" value="NM_030808.5"/>
</dbReference>
<dbReference type="RefSeq" id="XP_016880674.1">
    <property type="nucleotide sequence ID" value="XM_017025185.1"/>
</dbReference>
<dbReference type="RefSeq" id="XP_016880676.1">
    <property type="nucleotide sequence ID" value="XM_017025187.1"/>
</dbReference>
<dbReference type="RefSeq" id="XP_047292817.1">
    <molecule id="Q9GZM8-1"/>
    <property type="nucleotide sequence ID" value="XM_047436861.1"/>
</dbReference>
<dbReference type="RefSeq" id="XP_054173423.1">
    <molecule id="Q9GZM8-1"/>
    <property type="nucleotide sequence ID" value="XM_054317448.1"/>
</dbReference>
<dbReference type="PDB" id="2V66">
    <property type="method" value="X-ray"/>
    <property type="resolution" value="2.10 A"/>
    <property type="chains" value="B/C/D/E=58-168"/>
</dbReference>
<dbReference type="PDBsum" id="2V66"/>
<dbReference type="SMR" id="Q9GZM8"/>
<dbReference type="BioGRID" id="123527">
    <property type="interactions" value="163"/>
</dbReference>
<dbReference type="DIP" id="DIP-29554N"/>
<dbReference type="FunCoup" id="Q9GZM8">
    <property type="interactions" value="1400"/>
</dbReference>
<dbReference type="IntAct" id="Q9GZM8">
    <property type="interactions" value="173"/>
</dbReference>
<dbReference type="MINT" id="Q9GZM8"/>
<dbReference type="STRING" id="9606.ENSP00000333982"/>
<dbReference type="MoonDB" id="Q9GZM8">
    <property type="type" value="Predicted"/>
</dbReference>
<dbReference type="GlyGen" id="Q9GZM8">
    <property type="glycosylation" value="1 site, 1 O-linked glycan (1 site)"/>
</dbReference>
<dbReference type="iPTMnet" id="Q9GZM8"/>
<dbReference type="PhosphoSitePlus" id="Q9GZM8"/>
<dbReference type="SwissPalm" id="Q9GZM8"/>
<dbReference type="BioMuta" id="NDEL1"/>
<dbReference type="DMDM" id="74725006"/>
<dbReference type="jPOST" id="Q9GZM8"/>
<dbReference type="MassIVE" id="Q9GZM8"/>
<dbReference type="PaxDb" id="9606-ENSP00000333982"/>
<dbReference type="PeptideAtlas" id="Q9GZM8"/>
<dbReference type="ProteomicsDB" id="80092">
    <molecule id="Q9GZM8-1"/>
</dbReference>
<dbReference type="ProteomicsDB" id="80093">
    <molecule id="Q9GZM8-2"/>
</dbReference>
<dbReference type="Pumba" id="Q9GZM8"/>
<dbReference type="Antibodypedia" id="12558">
    <property type="antibodies" value="497 antibodies from 37 providers"/>
</dbReference>
<dbReference type="DNASU" id="81565"/>
<dbReference type="Ensembl" id="ENST00000334527.12">
    <molecule id="Q9GZM8-1"/>
    <property type="protein sequence ID" value="ENSP00000333982.7"/>
    <property type="gene ID" value="ENSG00000166579.16"/>
</dbReference>
<dbReference type="Ensembl" id="ENST00000402554.7">
    <molecule id="Q9GZM8-3"/>
    <property type="protein sequence ID" value="ENSP00000384963.3"/>
    <property type="gene ID" value="ENSG00000166579.16"/>
</dbReference>
<dbReference type="GeneID" id="81565"/>
<dbReference type="KEGG" id="hsa:81565"/>
<dbReference type="MANE-Select" id="ENST00000334527.12">
    <property type="protein sequence ID" value="ENSP00000333982.7"/>
    <property type="RefSeq nucleotide sequence ID" value="NM_030808.5"/>
    <property type="RefSeq protein sequence ID" value="NP_110435.1"/>
</dbReference>
<dbReference type="UCSC" id="uc002gli.5">
    <molecule id="Q9GZM8-1"/>
    <property type="organism name" value="human"/>
</dbReference>
<dbReference type="AGR" id="HGNC:17620"/>
<dbReference type="CTD" id="81565"/>
<dbReference type="DisGeNET" id="81565"/>
<dbReference type="GeneCards" id="NDEL1"/>
<dbReference type="HGNC" id="HGNC:17620">
    <property type="gene designation" value="NDEL1"/>
</dbReference>
<dbReference type="HPA" id="ENSG00000166579">
    <property type="expression patterns" value="Low tissue specificity"/>
</dbReference>
<dbReference type="MIM" id="607538">
    <property type="type" value="gene"/>
</dbReference>
<dbReference type="neXtProt" id="NX_Q9GZM8"/>
<dbReference type="OpenTargets" id="ENSG00000166579"/>
<dbReference type="PharmGKB" id="PA134887314"/>
<dbReference type="VEuPathDB" id="HostDB:ENSG00000166579"/>
<dbReference type="eggNOG" id="KOG1853">
    <property type="taxonomic scope" value="Eukaryota"/>
</dbReference>
<dbReference type="GeneTree" id="ENSGT00390000000111"/>
<dbReference type="HOGENOM" id="CLU_057872_1_0_1"/>
<dbReference type="InParanoid" id="Q9GZM8"/>
<dbReference type="OMA" id="KTYREHA"/>
<dbReference type="OrthoDB" id="5877028at2759"/>
<dbReference type="PAN-GO" id="Q9GZM8">
    <property type="GO annotations" value="13 GO annotations based on evolutionary models"/>
</dbReference>
<dbReference type="PhylomeDB" id="Q9GZM8"/>
<dbReference type="TreeFam" id="TF325693"/>
<dbReference type="PathwayCommons" id="Q9GZM8"/>
<dbReference type="Reactome" id="R-HSA-141444">
    <property type="pathway name" value="Amplification of signal from unattached kinetochores via a MAD2 inhibitory signal"/>
</dbReference>
<dbReference type="Reactome" id="R-HSA-2467813">
    <property type="pathway name" value="Separation of Sister Chromatids"/>
</dbReference>
<dbReference type="Reactome" id="R-HSA-2500257">
    <property type="pathway name" value="Resolution of Sister Chromatid Cohesion"/>
</dbReference>
<dbReference type="Reactome" id="R-HSA-5663220">
    <property type="pathway name" value="RHO GTPases Activate Formins"/>
</dbReference>
<dbReference type="Reactome" id="R-HSA-68877">
    <property type="pathway name" value="Mitotic Prometaphase"/>
</dbReference>
<dbReference type="Reactome" id="R-HSA-9648025">
    <property type="pathway name" value="EML4 and NUDC in mitotic spindle formation"/>
</dbReference>
<dbReference type="SignaLink" id="Q9GZM8"/>
<dbReference type="SIGNOR" id="Q9GZM8"/>
<dbReference type="BioGRID-ORCS" id="81565">
    <property type="hits" value="16 hits in 1164 CRISPR screens"/>
</dbReference>
<dbReference type="CD-CODE" id="232F8A39">
    <property type="entry name" value="P-body"/>
</dbReference>
<dbReference type="CD-CODE" id="8C2F96ED">
    <property type="entry name" value="Centrosome"/>
</dbReference>
<dbReference type="CD-CODE" id="DEE660B4">
    <property type="entry name" value="Stress granule"/>
</dbReference>
<dbReference type="ChiTaRS" id="NDEL1">
    <property type="organism name" value="human"/>
</dbReference>
<dbReference type="EvolutionaryTrace" id="Q9GZM8"/>
<dbReference type="GeneWiki" id="NDEL1"/>
<dbReference type="GenomeRNAi" id="81565"/>
<dbReference type="Pharos" id="Q9GZM8">
    <property type="development level" value="Tbio"/>
</dbReference>
<dbReference type="PRO" id="PR:Q9GZM8"/>
<dbReference type="Proteomes" id="UP000005640">
    <property type="component" value="Chromosome 17"/>
</dbReference>
<dbReference type="RNAct" id="Q9GZM8">
    <property type="molecule type" value="protein"/>
</dbReference>
<dbReference type="Bgee" id="ENSG00000166579">
    <property type="expression patterns" value="Expressed in adrenal tissue and 205 other cell types or tissues"/>
</dbReference>
<dbReference type="ExpressionAtlas" id="Q9GZM8">
    <property type="expression patterns" value="baseline and differential"/>
</dbReference>
<dbReference type="GO" id="GO:1904115">
    <property type="term" value="C:axon cytoplasm"/>
    <property type="evidence" value="ECO:0007669"/>
    <property type="project" value="GOC"/>
</dbReference>
<dbReference type="GO" id="GO:0043203">
    <property type="term" value="C:axon hillock"/>
    <property type="evidence" value="ECO:0007669"/>
    <property type="project" value="Ensembl"/>
</dbReference>
<dbReference type="GO" id="GO:0031252">
    <property type="term" value="C:cell leading edge"/>
    <property type="evidence" value="ECO:0007669"/>
    <property type="project" value="Ensembl"/>
</dbReference>
<dbReference type="GO" id="GO:0005813">
    <property type="term" value="C:centrosome"/>
    <property type="evidence" value="ECO:0000318"/>
    <property type="project" value="GO_Central"/>
</dbReference>
<dbReference type="GO" id="GO:0005829">
    <property type="term" value="C:cytosol"/>
    <property type="evidence" value="ECO:0000304"/>
    <property type="project" value="Reactome"/>
</dbReference>
<dbReference type="GO" id="GO:0005871">
    <property type="term" value="C:kinesin complex"/>
    <property type="evidence" value="ECO:0000318"/>
    <property type="project" value="GO_Central"/>
</dbReference>
<dbReference type="GO" id="GO:0000776">
    <property type="term" value="C:kinetochore"/>
    <property type="evidence" value="ECO:0000314"/>
    <property type="project" value="UniProtKB"/>
</dbReference>
<dbReference type="GO" id="GO:0005874">
    <property type="term" value="C:microtubule"/>
    <property type="evidence" value="ECO:0007669"/>
    <property type="project" value="UniProtKB-KW"/>
</dbReference>
<dbReference type="GO" id="GO:0060053">
    <property type="term" value="C:neurofilament cytoskeleton"/>
    <property type="evidence" value="ECO:0007669"/>
    <property type="project" value="Ensembl"/>
</dbReference>
<dbReference type="GO" id="GO:0005819">
    <property type="term" value="C:spindle"/>
    <property type="evidence" value="ECO:0007669"/>
    <property type="project" value="UniProtKB-SubCell"/>
</dbReference>
<dbReference type="GO" id="GO:0008021">
    <property type="term" value="C:synaptic vesicle"/>
    <property type="evidence" value="ECO:0007669"/>
    <property type="project" value="Ensembl"/>
</dbReference>
<dbReference type="GO" id="GO:0043014">
    <property type="term" value="F:alpha-tubulin binding"/>
    <property type="evidence" value="ECO:0007669"/>
    <property type="project" value="Ensembl"/>
</dbReference>
<dbReference type="GO" id="GO:0048487">
    <property type="term" value="F:beta-tubulin binding"/>
    <property type="evidence" value="ECO:0007669"/>
    <property type="project" value="Ensembl"/>
</dbReference>
<dbReference type="GO" id="GO:0042802">
    <property type="term" value="F:identical protein binding"/>
    <property type="evidence" value="ECO:0000353"/>
    <property type="project" value="IntAct"/>
</dbReference>
<dbReference type="GO" id="GO:0008017">
    <property type="term" value="F:microtubule binding"/>
    <property type="evidence" value="ECO:0000318"/>
    <property type="project" value="GO_Central"/>
</dbReference>
<dbReference type="GO" id="GO:0016477">
    <property type="term" value="P:cell migration"/>
    <property type="evidence" value="ECO:0000318"/>
    <property type="project" value="GO_Central"/>
</dbReference>
<dbReference type="GO" id="GO:0021955">
    <property type="term" value="P:central nervous system neuron axonogenesis"/>
    <property type="evidence" value="ECO:0007669"/>
    <property type="project" value="Ensembl"/>
</dbReference>
<dbReference type="GO" id="GO:0051642">
    <property type="term" value="P:centrosome localization"/>
    <property type="evidence" value="ECO:0000318"/>
    <property type="project" value="GO_Central"/>
</dbReference>
<dbReference type="GO" id="GO:0021799">
    <property type="term" value="P:cerebral cortex radially oriented cell migration"/>
    <property type="evidence" value="ECO:0007669"/>
    <property type="project" value="Ensembl"/>
</dbReference>
<dbReference type="GO" id="GO:0007059">
    <property type="term" value="P:chromosome segregation"/>
    <property type="evidence" value="ECO:0000315"/>
    <property type="project" value="UniProtKB"/>
</dbReference>
<dbReference type="GO" id="GO:0051303">
    <property type="term" value="P:establishment of chromosome localization"/>
    <property type="evidence" value="ECO:0000318"/>
    <property type="project" value="GO_Central"/>
</dbReference>
<dbReference type="GO" id="GO:0000132">
    <property type="term" value="P:establishment of mitotic spindle orientation"/>
    <property type="evidence" value="ECO:0000318"/>
    <property type="project" value="GO_Central"/>
</dbReference>
<dbReference type="GO" id="GO:0001833">
    <property type="term" value="P:inner cell mass cell proliferation"/>
    <property type="evidence" value="ECO:0007669"/>
    <property type="project" value="Ensembl"/>
</dbReference>
<dbReference type="GO" id="GO:0008286">
    <property type="term" value="P:insulin receptor signaling pathway"/>
    <property type="evidence" value="ECO:0007669"/>
    <property type="project" value="Ensembl"/>
</dbReference>
<dbReference type="GO" id="GO:0032418">
    <property type="term" value="P:lysosome localization"/>
    <property type="evidence" value="ECO:0000250"/>
    <property type="project" value="UniProtKB"/>
</dbReference>
<dbReference type="GO" id="GO:0007020">
    <property type="term" value="P:microtubule nucleation"/>
    <property type="evidence" value="ECO:0000318"/>
    <property type="project" value="GO_Central"/>
</dbReference>
<dbReference type="GO" id="GO:0007100">
    <property type="term" value="P:mitotic centrosome separation"/>
    <property type="evidence" value="ECO:0000318"/>
    <property type="project" value="GO_Central"/>
</dbReference>
<dbReference type="GO" id="GO:0060052">
    <property type="term" value="P:neurofilament cytoskeleton organization"/>
    <property type="evidence" value="ECO:0007669"/>
    <property type="project" value="Ensembl"/>
</dbReference>
<dbReference type="GO" id="GO:1990138">
    <property type="term" value="P:neuron projection extension"/>
    <property type="evidence" value="ECO:0007669"/>
    <property type="project" value="Ensembl"/>
</dbReference>
<dbReference type="GO" id="GO:0043547">
    <property type="term" value="P:positive regulation of GTPase activity"/>
    <property type="evidence" value="ECO:0000315"/>
    <property type="project" value="CACAO"/>
</dbReference>
<dbReference type="GO" id="GO:1900029">
    <property type="term" value="P:positive regulation of ruffle assembly"/>
    <property type="evidence" value="ECO:0000250"/>
    <property type="project" value="UniProtKB"/>
</dbReference>
<dbReference type="GO" id="GO:0140650">
    <property type="term" value="P:radial glia-guided pyramidal neuron migration"/>
    <property type="evidence" value="ECO:0007669"/>
    <property type="project" value="Ensembl"/>
</dbReference>
<dbReference type="GO" id="GO:0033157">
    <property type="term" value="P:regulation of intracellular protein transport"/>
    <property type="evidence" value="ECO:0000315"/>
    <property type="project" value="CACAO"/>
</dbReference>
<dbReference type="GO" id="GO:0010975">
    <property type="term" value="P:regulation of neuron projection development"/>
    <property type="evidence" value="ECO:0000318"/>
    <property type="project" value="GO_Central"/>
</dbReference>
<dbReference type="GO" id="GO:0008090">
    <property type="term" value="P:retrograde axonal transport"/>
    <property type="evidence" value="ECO:0007669"/>
    <property type="project" value="Ensembl"/>
</dbReference>
<dbReference type="GO" id="GO:0047496">
    <property type="term" value="P:vesicle transport along microtubule"/>
    <property type="evidence" value="ECO:0000318"/>
    <property type="project" value="GO_Central"/>
</dbReference>
<dbReference type="Gene3D" id="6.10.250.1080">
    <property type="match status" value="1"/>
</dbReference>
<dbReference type="InterPro" id="IPR033494">
    <property type="entry name" value="NUDE"/>
</dbReference>
<dbReference type="InterPro" id="IPR006964">
    <property type="entry name" value="NUDE_dom"/>
</dbReference>
<dbReference type="PANTHER" id="PTHR10921">
    <property type="entry name" value="NUCLEAR DISTRIBUTION PROTEIN NUDE HOMOLOG 1"/>
    <property type="match status" value="1"/>
</dbReference>
<dbReference type="PANTHER" id="PTHR10921:SF0">
    <property type="entry name" value="NUCLEAR DISTRIBUTION PROTEIN NUDE-LIKE 1"/>
    <property type="match status" value="1"/>
</dbReference>
<dbReference type="Pfam" id="PF04880">
    <property type="entry name" value="NUDE_C"/>
    <property type="match status" value="1"/>
</dbReference>
<comment type="function">
    <text evidence="2 3 8 11 16 19 21">Required for organization of the cellular microtubule array and microtubule anchoring at the centrosome. May regulate microtubule organization at least in part by targeting the microtubule severing protein KATNA1 to the centrosome. Also positively regulates the activity of the minus-end directed microtubule motor protein dynein. May enhance dynein-mediated microtubule sliding by targeting dynein to the microtubule plus ends. Required for several dynein- and microtubule-dependent processes such as the maintenance of Golgi integrity, the centripetal motion of secretory vesicles and the coupling of the nucleus and centrosome. Also required during brain development for the migration of newly formed neurons from the ventricular/subventricular zone toward the cortical plate. Plays a role, together with DISC1, in the regulation of neurite outgrowth. Required for mitosis in some cell types but appears to be dispensible for mitosis in cortical neuronal progenitors, which instead requires NDE1. Facilitates the polymerization of neurofilaments from the individual subunits NEFH and NEFL. Positively regulates lysosome peripheral distribution and ruffled border formation in osteoclasts (By similarity). Plays a role, together with DISC1, in the regulation of neurite outgrowth (By similarity). May act as a RAB9A/B effector that tethers RAB9-associated late endosomes to the dynein motor for their retrograde transport to the trans-Golgi network (PubMed:34793709).</text>
</comment>
<comment type="subunit">
    <text evidence="1 3 6 7 8 9 10 11 12 13 15 16 17 18 19 21">Interacts with PLEKHM1 (via N- and C-terminus) (By similarity). Interacts with YWHAE. Interacts directly with NEFL and indirectly with NEFH. Interacts with microtubules (By similarity). Self-associates. Interacts with DISC1, dynein, dynactin, tubulin gamma, KATNA1, KATNB1, PAFAH1B1, PCM1 and PCNT. Interacts (via C-terminus) with CENPF. Interacts with ZNF365. Interacts with GTP-bound RAB9A; the interaction may lead to RAB9A-dynein motor tethering (PubMed:34793709).</text>
</comment>
<comment type="interaction">
    <interactant intactId="EBI-928842">
        <id>Q9GZM8</id>
    </interactant>
    <interactant intactId="EBI-742038">
        <id>Q9P2A4</id>
        <label>ABI3</label>
    </interactant>
    <organismsDiffer>false</organismsDiffer>
    <experiments>3</experiments>
</comment>
<comment type="interaction">
    <interactant intactId="EBI-928842">
        <id>Q9GZM8</id>
    </interactant>
    <interactant intactId="EBI-745226">
        <id>Q13155</id>
        <label>AIMP2</label>
    </interactant>
    <organismsDiffer>false</organismsDiffer>
    <experiments>3</experiments>
</comment>
<comment type="interaction">
    <interactant intactId="EBI-928842">
        <id>Q9GZM8</id>
    </interactant>
    <interactant intactId="EBI-2548012">
        <id>Q9H2G9</id>
        <label>BLZF1</label>
    </interactant>
    <organismsDiffer>false</organismsDiffer>
    <experiments>3</experiments>
</comment>
<comment type="interaction">
    <interactant intactId="EBI-928842">
        <id>Q9GZM8</id>
    </interactant>
    <interactant intactId="EBI-2341576">
        <id>P35226</id>
        <label>BMI1</label>
    </interactant>
    <organismsDiffer>false</organismsDiffer>
    <experiments>3</experiments>
</comment>
<comment type="interaction">
    <interactant intactId="EBI-928842">
        <id>Q9GZM8</id>
    </interactant>
    <interactant intactId="EBI-10193358">
        <id>Q96GS4</id>
        <label>BORCS6</label>
    </interactant>
    <organismsDiffer>false</organismsDiffer>
    <experiments>6</experiments>
</comment>
<comment type="interaction">
    <interactant intactId="EBI-928842">
        <id>Q9GZM8</id>
    </interactant>
    <interactant intactId="EBI-2837444">
        <id>Q8WUW1</id>
        <label>BRK1</label>
    </interactant>
    <organismsDiffer>false</organismsDiffer>
    <experiments>9</experiments>
</comment>
<comment type="interaction">
    <interactant intactId="EBI-928842">
        <id>Q9GZM8</id>
    </interactant>
    <interactant intactId="EBI-10175300">
        <id>Q8TD31-3</id>
        <label>CCHCR1</label>
    </interactant>
    <organismsDiffer>false</organismsDiffer>
    <experiments>3</experiments>
</comment>
<comment type="interaction">
    <interactant intactId="EBI-928842">
        <id>Q9GZM8</id>
    </interactant>
    <interactant intactId="EBI-1104948">
        <id>Q9C0I3</id>
        <label>CCSER1</label>
    </interactant>
    <organismsDiffer>false</organismsDiffer>
    <experiments>5</experiments>
</comment>
<comment type="interaction">
    <interactant intactId="EBI-928842">
        <id>Q9GZM8</id>
    </interactant>
    <interactant intactId="EBI-714702">
        <id>Q9H7U1</id>
        <label>CCSER2</label>
    </interactant>
    <organismsDiffer>false</organismsDiffer>
    <experiments>5</experiments>
</comment>
<comment type="interaction">
    <interactant intactId="EBI-928842">
        <id>Q9GZM8</id>
    </interactant>
    <interactant intactId="EBI-968343">
        <id>P49454</id>
        <label>CENPF</label>
    </interactant>
    <organismsDiffer>false</organismsDiffer>
    <experiments>6</experiments>
</comment>
<comment type="interaction">
    <interactant intactId="EBI-928842">
        <id>Q9GZM8</id>
    </interactant>
    <interactant intactId="EBI-1046993">
        <id>Q66GS9</id>
        <label>CEP135</label>
    </interactant>
    <organismsDiffer>false</organismsDiffer>
    <experiments>4</experiments>
</comment>
<comment type="interaction">
    <interactant intactId="EBI-928842">
        <id>Q9GZM8</id>
    </interactant>
    <interactant intactId="EBI-25837549">
        <id>P28329-3</id>
        <label>CHAT</label>
    </interactant>
    <organismsDiffer>false</organismsDiffer>
    <experiments>3</experiments>
</comment>
<comment type="interaction">
    <interactant intactId="EBI-928842">
        <id>Q9GZM8</id>
    </interactant>
    <interactant intactId="EBI-12357161">
        <id>Q5SYC1</id>
        <label>CLVS2</label>
    </interactant>
    <organismsDiffer>false</organismsDiffer>
    <experiments>3</experiments>
</comment>
<comment type="interaction">
    <interactant intactId="EBI-928842">
        <id>Q9GZM8</id>
    </interactant>
    <interactant intactId="EBI-5453285">
        <id>Q2TBE0</id>
        <label>CWF19L2</label>
    </interactant>
    <organismsDiffer>false</organismsDiffer>
    <experiments>3</experiments>
</comment>
<comment type="interaction">
    <interactant intactId="EBI-928842">
        <id>Q9GZM8</id>
    </interactant>
    <interactant intactId="EBI-742054">
        <id>Q96D03</id>
        <label>DDIT4L</label>
    </interactant>
    <organismsDiffer>false</organismsDiffer>
    <experiments>3</experiments>
</comment>
<comment type="interaction">
    <interactant intactId="EBI-928842">
        <id>Q9GZM8</id>
    </interactant>
    <interactant intactId="EBI-529989">
        <id>Q9NRI5</id>
        <label>DISC1</label>
    </interactant>
    <organismsDiffer>false</organismsDiffer>
    <experiments>16</experiments>
</comment>
<comment type="interaction">
    <interactant intactId="EBI-928842">
        <id>Q9GZM8</id>
    </interactant>
    <interactant intactId="EBI-15881455">
        <id>Q9NRI5-1</id>
        <label>DISC1</label>
    </interactant>
    <organismsDiffer>false</organismsDiffer>
    <experiments>4</experiments>
</comment>
<comment type="interaction">
    <interactant intactId="EBI-928842">
        <id>Q9GZM8</id>
    </interactant>
    <interactant intactId="EBI-11988027">
        <id>Q9NRI5-2</id>
        <label>DISC1</label>
    </interactant>
    <organismsDiffer>false</organismsDiffer>
    <experiments>3</experiments>
</comment>
<comment type="interaction">
    <interactant intactId="EBI-928842">
        <id>Q9GZM8</id>
    </interactant>
    <interactant intactId="EBI-1104700">
        <id>Q155Q3</id>
        <label>DIXDC1</label>
    </interactant>
    <organismsDiffer>false</organismsDiffer>
    <experiments>5</experiments>
</comment>
<comment type="interaction">
    <interactant intactId="EBI-928842">
        <id>Q9GZM8</id>
    </interactant>
    <interactant intactId="EBI-740402">
        <id>O60941</id>
        <label>DTNB</label>
    </interactant>
    <organismsDiffer>false</organismsDiffer>
    <experiments>3</experiments>
</comment>
<comment type="interaction">
    <interactant intactId="EBI-928842">
        <id>Q9GZM8</id>
    </interactant>
    <interactant intactId="EBI-348399">
        <id>P22607</id>
        <label>FGFR3</label>
    </interactant>
    <organismsDiffer>false</organismsDiffer>
    <experiments>3</experiments>
</comment>
<comment type="interaction">
    <interactant intactId="EBI-928842">
        <id>Q9GZM8</id>
    </interactant>
    <interactant intactId="EBI-618309">
        <id>Q08379</id>
        <label>GOLGA2</label>
    </interactant>
    <organismsDiffer>false</organismsDiffer>
    <experiments>3</experiments>
</comment>
<comment type="interaction">
    <interactant intactId="EBI-928842">
        <id>Q9GZM8</id>
    </interactant>
    <interactant intactId="EBI-351506">
        <id>P06396</id>
        <label>GSN</label>
    </interactant>
    <organismsDiffer>false</organismsDiffer>
    <experiments>3</experiments>
</comment>
<comment type="interaction">
    <interactant intactId="EBI-928842">
        <id>Q9GZM8</id>
    </interactant>
    <interactant intactId="EBI-350145">
        <id>P01112</id>
        <label>HRAS</label>
    </interactant>
    <organismsDiffer>false</organismsDiffer>
    <experiments>3</experiments>
</comment>
<comment type="interaction">
    <interactant intactId="EBI-928842">
        <id>Q9GZM8</id>
    </interactant>
    <interactant intactId="EBI-11614103">
        <id>Q16891-1</id>
        <label>IMMT</label>
    </interactant>
    <organismsDiffer>false</organismsDiffer>
    <experiments>4</experiments>
</comment>
<comment type="interaction">
    <interactant intactId="EBI-928842">
        <id>Q9GZM8</id>
    </interactant>
    <interactant intactId="EBI-2125614">
        <id>Q9BVG8</id>
        <label>KIFC3</label>
    </interactant>
    <organismsDiffer>false</organismsDiffer>
    <experiments>3</experiments>
</comment>
<comment type="interaction">
    <interactant intactId="EBI-928842">
        <id>Q9GZM8</id>
    </interactant>
    <interactant intactId="EBI-10171697">
        <id>Q6A162</id>
        <label>KRT40</label>
    </interactant>
    <organismsDiffer>false</organismsDiffer>
    <experiments>5</experiments>
</comment>
<comment type="interaction">
    <interactant intactId="EBI-928842">
        <id>Q9GZM8</id>
    </interactant>
    <interactant intactId="EBI-10182361">
        <id>Q9NS73-5</id>
        <label>MBIP</label>
    </interactant>
    <organismsDiffer>false</organismsDiffer>
    <experiments>3</experiments>
</comment>
<comment type="interaction">
    <interactant intactId="EBI-928842">
        <id>Q9GZM8</id>
    </interactant>
    <interactant intactId="EBI-394704">
        <id>Q9P086</id>
        <label>MED11</label>
    </interactant>
    <organismsDiffer>false</organismsDiffer>
    <experiments>3</experiments>
</comment>
<comment type="interaction">
    <interactant intactId="EBI-928842">
        <id>Q9GZM8</id>
    </interactant>
    <interactant intactId="EBI-1104552">
        <id>Q9NYP9</id>
        <label>MIS18A</label>
    </interactant>
    <organismsDiffer>false</organismsDiffer>
    <experiments>5</experiments>
</comment>
<comment type="interaction">
    <interactant intactId="EBI-928842">
        <id>Q9GZM8</id>
    </interactant>
    <interactant intactId="EBI-742948">
        <id>Q5JR59</id>
        <label>MTUS2</label>
    </interactant>
    <organismsDiffer>false</organismsDiffer>
    <experiments>3</experiments>
</comment>
<comment type="interaction">
    <interactant intactId="EBI-928842">
        <id>Q9GZM8</id>
    </interactant>
    <interactant intactId="EBI-715849">
        <id>O14777</id>
        <label>NDC80</label>
    </interactant>
    <organismsDiffer>false</organismsDiffer>
    <experiments>4</experiments>
</comment>
<comment type="interaction">
    <interactant intactId="EBI-928842">
        <id>Q9GZM8</id>
    </interactant>
    <interactant intactId="EBI-941227">
        <id>Q9NXR1</id>
        <label>NDE1</label>
    </interactant>
    <organismsDiffer>false</organismsDiffer>
    <experiments>5</experiments>
</comment>
<comment type="interaction">
    <interactant intactId="EBI-928842">
        <id>Q9GZM8</id>
    </interactant>
    <interactant intactId="EBI-928842">
        <id>Q9GZM8</id>
        <label>NDEL1</label>
    </interactant>
    <organismsDiffer>false</organismsDiffer>
    <experiments>14</experiments>
</comment>
<comment type="interaction">
    <interactant intactId="EBI-928842">
        <id>Q9GZM8</id>
    </interactant>
    <interactant intactId="EBI-741048">
        <id>Q7Z3B4</id>
        <label>NUP54</label>
    </interactant>
    <organismsDiffer>false</organismsDiffer>
    <experiments>3</experiments>
</comment>
<comment type="interaction">
    <interactant intactId="EBI-928842">
        <id>Q9GZM8</id>
    </interactant>
    <interactant intactId="EBI-720620">
        <id>P43034</id>
        <label>PAFAH1B1</label>
    </interactant>
    <organismsDiffer>false</organismsDiffer>
    <experiments>6</experiments>
</comment>
<comment type="interaction">
    <interactant intactId="EBI-928842">
        <id>Q9GZM8</id>
    </interactant>
    <interactant intactId="EBI-3921217">
        <id>Q9HBI0</id>
        <label>PARVG</label>
    </interactant>
    <organismsDiffer>false</organismsDiffer>
    <experiments>3</experiments>
</comment>
<comment type="interaction">
    <interactant intactId="EBI-928842">
        <id>Q9GZM8</id>
    </interactant>
    <interactant intactId="EBI-79165">
        <id>Q9NRD5</id>
        <label>PICK1</label>
    </interactant>
    <organismsDiffer>false</organismsDiffer>
    <experiments>3</experiments>
</comment>
<comment type="interaction">
    <interactant intactId="EBI-928842">
        <id>Q9GZM8</id>
    </interactant>
    <interactant intactId="EBI-702235">
        <id>Q99959</id>
        <label>PKP2</label>
    </interactant>
    <organismsDiffer>false</organismsDiffer>
    <experiments>4</experiments>
</comment>
<comment type="interaction">
    <interactant intactId="EBI-928842">
        <id>Q9GZM8</id>
    </interactant>
    <interactant intactId="EBI-10987518">
        <id>Q99959-2</id>
        <label>PKP2</label>
    </interactant>
    <organismsDiffer>false</organismsDiffer>
    <experiments>3</experiments>
</comment>
<comment type="interaction">
    <interactant intactId="EBI-928842">
        <id>Q9GZM8</id>
    </interactant>
    <interactant intactId="EBI-11954250">
        <id>P49023-2</id>
        <label>PXN</label>
    </interactant>
    <organismsDiffer>false</organismsDiffer>
    <experiments>5</experiments>
</comment>
<comment type="interaction">
    <interactant intactId="EBI-928842">
        <id>Q9GZM8</id>
    </interactant>
    <interactant intactId="EBI-749483">
        <id>O75971</id>
        <label>SNAPC5</label>
    </interactant>
    <organismsDiffer>false</organismsDiffer>
    <experiments>3</experiments>
</comment>
<comment type="interaction">
    <interactant intactId="EBI-928842">
        <id>Q9GZM8</id>
    </interactant>
    <interactant intactId="EBI-12004298">
        <id>O75971-2</id>
        <label>SNAPC5</label>
    </interactant>
    <organismsDiffer>false</organismsDiffer>
    <experiments>3</experiments>
</comment>
<comment type="interaction">
    <interactant intactId="EBI-928842">
        <id>Q9GZM8</id>
    </interactant>
    <interactant intactId="EBI-2554984">
        <id>Q9Y6A5</id>
        <label>TACC3</label>
    </interactant>
    <organismsDiffer>false</organismsDiffer>
    <experiments>3</experiments>
</comment>
<comment type="interaction">
    <interactant intactId="EBI-928842">
        <id>Q9GZM8</id>
    </interactant>
    <interactant intactId="EBI-765817">
        <id>Q9Y228</id>
        <label>TRAF3IP3</label>
    </interactant>
    <organismsDiffer>false</organismsDiffer>
    <experiments>6</experiments>
</comment>
<comment type="interaction">
    <interactant intactId="EBI-928842">
        <id>Q9GZM8</id>
    </interactant>
    <interactant intactId="EBI-719493">
        <id>P14373</id>
        <label>TRIM27</label>
    </interactant>
    <organismsDiffer>false</organismsDiffer>
    <experiments>9</experiments>
</comment>
<comment type="interaction">
    <interactant intactId="EBI-928842">
        <id>Q9GZM8</id>
    </interactant>
    <interactant intactId="EBI-741480">
        <id>Q9UMX0</id>
        <label>UBQLN1</label>
    </interactant>
    <organismsDiffer>false</organismsDiffer>
    <experiments>3</experiments>
</comment>
<comment type="interaction">
    <interactant intactId="EBI-928842">
        <id>Q9GZM8</id>
    </interactant>
    <interactant intactId="EBI-743272">
        <id>O75604</id>
        <label>USP2</label>
    </interactant>
    <organismsDiffer>false</organismsDiffer>
    <experiments>6</experiments>
</comment>
<comment type="interaction">
    <interactant intactId="EBI-928842">
        <id>Q9GZM8</id>
    </interactant>
    <interactant intactId="EBI-295222">
        <id>P23025</id>
        <label>XPA</label>
    </interactant>
    <organismsDiffer>false</organismsDiffer>
    <experiments>6</experiments>
</comment>
<comment type="interaction">
    <interactant intactId="EBI-928842">
        <id>Q9GZM8</id>
    </interactant>
    <interactant intactId="EBI-14104088">
        <id>Q53FD0-2</id>
        <label>ZC2HC1C</label>
    </interactant>
    <organismsDiffer>false</organismsDiffer>
    <experiments>3</experiments>
</comment>
<comment type="interaction">
    <interactant intactId="EBI-928842">
        <id>Q9GZM8</id>
    </interactant>
    <interactant intactId="EBI-11278550">
        <id>P17014</id>
        <label>ZNF12</label>
    </interactant>
    <organismsDiffer>false</organismsDiffer>
    <experiments>3</experiments>
</comment>
<comment type="interaction">
    <interactant intactId="EBI-928842">
        <id>Q9GZM8</id>
    </interactant>
    <interactant intactId="EBI-10322527">
        <id>Q9UJW8</id>
        <label>ZNF180</label>
    </interactant>
    <organismsDiffer>false</organismsDiffer>
    <experiments>4</experiments>
</comment>
<comment type="interaction">
    <interactant intactId="EBI-928842">
        <id>Q9GZM8</id>
    </interactant>
    <interactant intactId="EBI-10177272">
        <id>P15622-3</id>
        <label>ZNF250</label>
    </interactant>
    <organismsDiffer>false</organismsDiffer>
    <experiments>5</experiments>
</comment>
<comment type="interaction">
    <interactant intactId="EBI-928842">
        <id>Q9GZM8</id>
    </interactant>
    <interactant intactId="EBI-10241410">
        <id>Q3ZCT1</id>
        <label>ZNF260</label>
    </interactant>
    <organismsDiffer>false</organismsDiffer>
    <experiments>3</experiments>
</comment>
<comment type="interaction">
    <interactant intactId="EBI-928842">
        <id>Q9GZM8</id>
    </interactant>
    <interactant intactId="EBI-2826570">
        <id>Q14C61</id>
        <label>ZNF264</label>
    </interactant>
    <organismsDiffer>false</organismsDiffer>
    <experiments>3</experiments>
</comment>
<comment type="interaction">
    <interactant intactId="EBI-928842">
        <id>Q9GZM8</id>
    </interactant>
    <interactant intactId="EBI-1640965">
        <id>P17036</id>
        <label>ZNF3</label>
    </interactant>
    <organismsDiffer>false</organismsDiffer>
    <experiments>3</experiments>
</comment>
<comment type="interaction">
    <interactant intactId="EBI-928842">
        <id>Q9GZM8</id>
    </interactant>
    <interactant intactId="EBI-11041653">
        <id>P13682</id>
        <label>ZNF35</label>
    </interactant>
    <organismsDiffer>false</organismsDiffer>
    <experiments>3</experiments>
</comment>
<comment type="interaction">
    <interactant intactId="EBI-928842">
        <id>Q9GZM8</id>
    </interactant>
    <interactant intactId="EBI-740727">
        <id>Q8TAU3</id>
        <label>ZNF417</label>
    </interactant>
    <organismsDiffer>false</organismsDiffer>
    <experiments>3</experiments>
</comment>
<comment type="interaction">
    <interactant intactId="EBI-928842">
        <id>Q9GZM8</id>
    </interactant>
    <interactant intactId="EBI-2849229">
        <id>P59923</id>
        <label>ZNF445</label>
    </interactant>
    <organismsDiffer>false</organismsDiffer>
    <experiments>3</experiments>
</comment>
<comment type="interaction">
    <interactant intactId="EBI-928842">
        <id>Q9GZM8</id>
    </interactant>
    <interactant intactId="EBI-1105370">
        <id>Q9ULM2</id>
        <label>ZNF490</label>
    </interactant>
    <organismsDiffer>false</organismsDiffer>
    <experiments>6</experiments>
</comment>
<comment type="interaction">
    <interactant intactId="EBI-928842">
        <id>Q9GZM8</id>
    </interactant>
    <interactant intactId="EBI-2841978">
        <id>Q6NX49</id>
        <label>ZNF544</label>
    </interactant>
    <organismsDiffer>false</organismsDiffer>
    <experiments>5</experiments>
</comment>
<comment type="interaction">
    <interactant intactId="EBI-928842">
        <id>Q9GZM8</id>
    </interactant>
    <interactant intactId="EBI-8490788">
        <id>Q68EA5</id>
        <label>ZNF57</label>
    </interactant>
    <organismsDiffer>false</organismsDiffer>
    <experiments>3</experiments>
</comment>
<comment type="interaction">
    <interactant intactId="EBI-928842">
        <id>Q9GZM8</id>
    </interactant>
    <interactant intactId="EBI-10172590">
        <id>Q7Z3I7</id>
        <label>ZNF572</label>
    </interactant>
    <organismsDiffer>false</organismsDiffer>
    <experiments>3</experiments>
</comment>
<comment type="interaction">
    <interactant intactId="EBI-928842">
        <id>Q9GZM8</id>
    </interactant>
    <interactant intactId="EBI-8653994">
        <id>Q96NL3</id>
        <label>ZNF599</label>
    </interactant>
    <organismsDiffer>false</organismsDiffer>
    <experiments>6</experiments>
</comment>
<comment type="interaction">
    <interactant intactId="EBI-928842">
        <id>Q9GZM8</id>
    </interactant>
    <interactant intactId="EBI-10255155">
        <id>Q6ZS27-3</id>
        <label>ZNF662</label>
    </interactant>
    <organismsDiffer>false</organismsDiffer>
    <experiments>3</experiments>
</comment>
<comment type="interaction">
    <interactant intactId="EBI-928842">
        <id>Q9GZM8</id>
    </interactant>
    <interactant intactId="EBI-748111">
        <id>Q96C28</id>
        <label>ZNF707</label>
    </interactant>
    <organismsDiffer>false</organismsDiffer>
    <experiments>3</experiments>
</comment>
<comment type="interaction">
    <interactant intactId="EBI-928842">
        <id>Q9GZM8</id>
    </interactant>
    <interactant intactId="EBI-10225757">
        <id>Q08AG5</id>
        <label>ZNF844</label>
    </interactant>
    <organismsDiffer>false</organismsDiffer>
    <experiments>6</experiments>
</comment>
<comment type="interaction">
    <interactant intactId="EBI-928842">
        <id>Q9GZM8</id>
    </interactant>
    <interactant intactId="EBI-917499">
        <id>P63005</id>
        <label>Pafah1b1</label>
    </interactant>
    <organismsDiffer>true</organismsDiffer>
    <experiments>4</experiments>
</comment>
<comment type="subcellular location">
    <subcellularLocation>
        <location>Cytoplasm</location>
        <location>Cytoskeleton</location>
    </subcellularLocation>
    <subcellularLocation>
        <location>Cytoplasm</location>
        <location>Cytoskeleton</location>
        <location>Microtubule organizing center</location>
        <location>Centrosome</location>
    </subcellularLocation>
    <subcellularLocation>
        <location>Chromosome</location>
        <location>Centromere</location>
        <location>Kinetochore</location>
    </subcellularLocation>
    <subcellularLocation>
        <location>Cytoplasm</location>
        <location>Cytoskeleton</location>
        <location>Spindle</location>
    </subcellularLocation>
    <text evidence="1">Localizes to the cell body of the motor neurons and colocalizes with assembled neurofilaments within axonal processes. Localizes to the microtubules of the manchette in elongated spermatids. Colocalizes with DISC1 in the perinuclear region, including the centrosome (By similarity). Localizes to the interphase centrosome and the mitotic spindle. Localizes to the kinetochore in a CENPF-dependent manner.</text>
</comment>
<comment type="alternative products">
    <event type="alternative splicing"/>
    <isoform>
        <id>Q9GZM8-1</id>
        <name>1</name>
        <sequence type="displayed"/>
    </isoform>
    <isoform>
        <id>Q9GZM8-2</id>
        <name>2</name>
        <sequence type="described" ref="VSP_019310"/>
    </isoform>
    <isoform>
        <id>Q9GZM8-3</id>
        <name>3</name>
        <sequence type="described" ref="VSP_047509"/>
    </isoform>
</comment>
<comment type="tissue specificity">
    <text evidence="14">Expressed in brain, heart, kidney, liver, lung, pancreas, placenta and skeletal muscle.</text>
</comment>
<comment type="developmental stage">
    <text evidence="15">Expression peaks in mitosis.</text>
</comment>
<comment type="PTM">
    <text evidence="6 8 15">Phosphorylated in mitosis. Can be phosphorylated by CDK1, CDK5 and MAPK1. Phosphorylation by CDK5 promotes interaction with KATNA1 and YWHAE.</text>
</comment>
<comment type="PTM">
    <text evidence="20">Palmitoylation at Cys-273 reduces affinity for dynein.</text>
</comment>
<comment type="similarity">
    <text evidence="24">Belongs to the nudE family.</text>
</comment>
<comment type="caution">
    <text evidence="25">Was originally thought to function as an oligopeptidase (NUDEL-oligopeptidase or endooligopeptidase A) which could regulate peptide levels relevant to brain function.</text>
</comment>
<keyword id="KW-0002">3D-structure</keyword>
<keyword id="KW-0025">Alternative splicing</keyword>
<keyword id="KW-0137">Centromere</keyword>
<keyword id="KW-0158">Chromosome</keyword>
<keyword id="KW-0175">Coiled coil</keyword>
<keyword id="KW-0963">Cytoplasm</keyword>
<keyword id="KW-0206">Cytoskeleton</keyword>
<keyword id="KW-0217">Developmental protein</keyword>
<keyword id="KW-0221">Differentiation</keyword>
<keyword id="KW-0995">Kinetochore</keyword>
<keyword id="KW-0449">Lipoprotein</keyword>
<keyword id="KW-0493">Microtubule</keyword>
<keyword id="KW-0524">Neurogenesis</keyword>
<keyword id="KW-0564">Palmitate</keyword>
<keyword id="KW-0597">Phosphoprotein</keyword>
<keyword id="KW-1267">Proteomics identification</keyword>
<keyword id="KW-1185">Reference proteome</keyword>
<keyword id="KW-0813">Transport</keyword>
<evidence type="ECO:0000250" key="1"/>
<evidence type="ECO:0000250" key="2">
    <source>
        <dbReference type="UniProtKB" id="Q78PB6"/>
    </source>
</evidence>
<evidence type="ECO:0000250" key="3">
    <source>
        <dbReference type="UniProtKB" id="Q9ERR1"/>
    </source>
</evidence>
<evidence type="ECO:0000255" key="4"/>
<evidence type="ECO:0000256" key="5">
    <source>
        <dbReference type="SAM" id="MobiDB-lite"/>
    </source>
</evidence>
<evidence type="ECO:0000269" key="6">
    <source>
    </source>
</evidence>
<evidence type="ECO:0000269" key="7">
    <source>
    </source>
</evidence>
<evidence type="ECO:0000269" key="8">
    <source>
    </source>
</evidence>
<evidence type="ECO:0000269" key="9">
    <source>
    </source>
</evidence>
<evidence type="ECO:0000269" key="10">
    <source>
    </source>
</evidence>
<evidence type="ECO:0000269" key="11">
    <source>
    </source>
</evidence>
<evidence type="ECO:0000269" key="12">
    <source>
    </source>
</evidence>
<evidence type="ECO:0000269" key="13">
    <source>
    </source>
</evidence>
<evidence type="ECO:0000269" key="14">
    <source>
    </source>
</evidence>
<evidence type="ECO:0000269" key="15">
    <source>
    </source>
</evidence>
<evidence type="ECO:0000269" key="16">
    <source>
    </source>
</evidence>
<evidence type="ECO:0000269" key="17">
    <source>
    </source>
</evidence>
<evidence type="ECO:0000269" key="18">
    <source>
    </source>
</evidence>
<evidence type="ECO:0000269" key="19">
    <source>
    </source>
</evidence>
<evidence type="ECO:0000269" key="20">
    <source>
    </source>
</evidence>
<evidence type="ECO:0000269" key="21">
    <source>
    </source>
</evidence>
<evidence type="ECO:0000303" key="22">
    <source>
    </source>
</evidence>
<evidence type="ECO:0000303" key="23">
    <source>
    </source>
</evidence>
<evidence type="ECO:0000305" key="24"/>
<evidence type="ECO:0000305" key="25">
    <source>
    </source>
</evidence>
<evidence type="ECO:0007744" key="26">
    <source>
    </source>
</evidence>
<evidence type="ECO:0007744" key="27">
    <source>
    </source>
</evidence>
<evidence type="ECO:0007744" key="28">
    <source>
    </source>
</evidence>
<evidence type="ECO:0007829" key="29">
    <source>
        <dbReference type="PDB" id="2V66"/>
    </source>
</evidence>